<comment type="function">
    <text evidence="1">Has a post-transcriptional repressor function in flagellum biogenesis. Associates with the 5'-UTR of fljK (25 kDa flagellin) mRNA and promotes its degradation.</text>
</comment>
<comment type="similarity">
    <text evidence="2">Belongs to the FlbT family.</text>
</comment>
<gene>
    <name type="primary">flbT</name>
    <name type="ordered locus">CC_1458</name>
</gene>
<evidence type="ECO:0000269" key="1">
    <source>
    </source>
</evidence>
<evidence type="ECO:0000305" key="2"/>
<keyword id="KW-1005">Bacterial flagellum biogenesis</keyword>
<keyword id="KW-1185">Reference proteome</keyword>
<keyword id="KW-0678">Repressor</keyword>
<keyword id="KW-0694">RNA-binding</keyword>
<feature type="chain" id="PRO_0000217155" description="Flagellum biosynthesis repressor protein FlbT">
    <location>
        <begin position="1"/>
        <end position="141"/>
    </location>
</feature>
<reference key="1">
    <citation type="journal article" date="1990" name="Gene">
        <title>Nucleotide sequence of the Caulobacter crescentus flaF and flbT genes and an analysis of codon usage in organisms with G + C-rich genomes.</title>
        <authorList>
            <person name="Schoenlein P.V."/>
            <person name="Gallman L.S."/>
            <person name="Winkler M.E."/>
            <person name="Ely B."/>
        </authorList>
    </citation>
    <scope>NUCLEOTIDE SEQUENCE [GENOMIC DNA]</scope>
    <source>
        <strain>ATCC 19089 / CIP 103742 / CB 15</strain>
    </source>
</reference>
<reference key="2">
    <citation type="journal article" date="2001" name="Proc. Natl. Acad. Sci. U.S.A.">
        <title>Complete genome sequence of Caulobacter crescentus.</title>
        <authorList>
            <person name="Nierman W.C."/>
            <person name="Feldblyum T.V."/>
            <person name="Laub M.T."/>
            <person name="Paulsen I.T."/>
            <person name="Nelson K.E."/>
            <person name="Eisen J.A."/>
            <person name="Heidelberg J.F."/>
            <person name="Alley M.R.K."/>
            <person name="Ohta N."/>
            <person name="Maddock J.R."/>
            <person name="Potocka I."/>
            <person name="Nelson W.C."/>
            <person name="Newton A."/>
            <person name="Stephens C."/>
            <person name="Phadke N.D."/>
            <person name="Ely B."/>
            <person name="DeBoy R.T."/>
            <person name="Dodson R.J."/>
            <person name="Durkin A.S."/>
            <person name="Gwinn M.L."/>
            <person name="Haft D.H."/>
            <person name="Kolonay J.F."/>
            <person name="Smit J."/>
            <person name="Craven M.B."/>
            <person name="Khouri H.M."/>
            <person name="Shetty J."/>
            <person name="Berry K.J."/>
            <person name="Utterback T.R."/>
            <person name="Tran K."/>
            <person name="Wolf A.M."/>
            <person name="Vamathevan J.J."/>
            <person name="Ermolaeva M.D."/>
            <person name="White O."/>
            <person name="Salzberg S.L."/>
            <person name="Venter J.C."/>
            <person name="Shapiro L."/>
            <person name="Fraser C.M."/>
        </authorList>
    </citation>
    <scope>NUCLEOTIDE SEQUENCE [LARGE SCALE GENOMIC DNA]</scope>
    <source>
        <strain>ATCC 19089 / CIP 103742 / CB 15</strain>
    </source>
</reference>
<reference key="3">
    <citation type="journal article" date="2000" name="Mol. Microbiol.">
        <title>FlbT, the post-transcriptional regulator of flagellin synthesis in Caulobacter crescentus, interacts with the 5' untranslated region of flagellin mRNA.</title>
        <authorList>
            <person name="Anderson P.E."/>
            <person name="Gober J.W."/>
        </authorList>
    </citation>
    <scope>FUNCTION</scope>
</reference>
<proteinExistence type="inferred from homology"/>
<accession>P21297</accession>
<organism>
    <name type="scientific">Caulobacter vibrioides (strain ATCC 19089 / CIP 103742 / CB 15)</name>
    <name type="common">Caulobacter crescentus</name>
    <dbReference type="NCBI Taxonomy" id="190650"/>
    <lineage>
        <taxon>Bacteria</taxon>
        <taxon>Pseudomonadati</taxon>
        <taxon>Pseudomonadota</taxon>
        <taxon>Alphaproteobacteria</taxon>
        <taxon>Caulobacterales</taxon>
        <taxon>Caulobacteraceae</taxon>
        <taxon>Caulobacter</taxon>
    </lineage>
</organism>
<dbReference type="EMBL" id="X15134">
    <property type="protein sequence ID" value="CAA33230.1"/>
    <property type="molecule type" value="Genomic_DNA"/>
</dbReference>
<dbReference type="EMBL" id="AE005673">
    <property type="protein sequence ID" value="AAK23439.1"/>
    <property type="molecule type" value="Genomic_DNA"/>
</dbReference>
<dbReference type="PIR" id="JQ0741">
    <property type="entry name" value="JQ0741"/>
</dbReference>
<dbReference type="RefSeq" id="NP_420271.1">
    <property type="nucleotide sequence ID" value="NC_002696.2"/>
</dbReference>
<dbReference type="RefSeq" id="WP_010919334.1">
    <property type="nucleotide sequence ID" value="NC_002696.2"/>
</dbReference>
<dbReference type="SMR" id="P21297"/>
<dbReference type="STRING" id="190650.CC_1458"/>
<dbReference type="EnsemblBacteria" id="AAK23439">
    <property type="protein sequence ID" value="AAK23439"/>
    <property type="gene ID" value="CC_1458"/>
</dbReference>
<dbReference type="KEGG" id="ccr:CC_1458"/>
<dbReference type="PATRIC" id="fig|190650.5.peg.1484"/>
<dbReference type="eggNOG" id="COG5443">
    <property type="taxonomic scope" value="Bacteria"/>
</dbReference>
<dbReference type="HOGENOM" id="CLU_130913_0_0_5"/>
<dbReference type="BioCyc" id="CAULO:CC1458-MONOMER"/>
<dbReference type="Proteomes" id="UP000001816">
    <property type="component" value="Chromosome"/>
</dbReference>
<dbReference type="GO" id="GO:0048027">
    <property type="term" value="F:mRNA 5'-UTR binding"/>
    <property type="evidence" value="ECO:0007669"/>
    <property type="project" value="UniProtKB-UniRule"/>
</dbReference>
<dbReference type="GO" id="GO:0044781">
    <property type="term" value="P:bacterial-type flagellum organization"/>
    <property type="evidence" value="ECO:0007669"/>
    <property type="project" value="UniProtKB-KW"/>
</dbReference>
<dbReference type="GO" id="GO:0006402">
    <property type="term" value="P:mRNA catabolic process"/>
    <property type="evidence" value="ECO:0007669"/>
    <property type="project" value="InterPro"/>
</dbReference>
<dbReference type="GO" id="GO:1902209">
    <property type="term" value="P:negative regulation of bacterial-type flagellum assembly"/>
    <property type="evidence" value="ECO:0007669"/>
    <property type="project" value="UniProtKB-UniRule"/>
</dbReference>
<dbReference type="HAMAP" id="MF_00783">
    <property type="entry name" value="FlbT"/>
    <property type="match status" value="1"/>
</dbReference>
<dbReference type="InterPro" id="IPR009967">
    <property type="entry name" value="Flagellum_FlbT"/>
</dbReference>
<dbReference type="NCBIfam" id="NF001995">
    <property type="entry name" value="PRK00794.1-1"/>
    <property type="match status" value="1"/>
</dbReference>
<dbReference type="Pfam" id="PF07378">
    <property type="entry name" value="FlbT"/>
    <property type="match status" value="1"/>
</dbReference>
<dbReference type="PIRSF" id="PIRSF009533">
    <property type="entry name" value="FlbT"/>
    <property type="match status" value="1"/>
</dbReference>
<sequence>MPLKLSLKPGEKFVLNGAVVQNGDRRGVLVLQNKASVLREKDIMQPDQVTTPARHIYFPVMMMYLDEVGAEKFYEEFATRLNEFMGVVRNPVVLQDCIAISKHVMAREYYKALMLSRKLIEYEDERLGHVSSGVSAGGDAG</sequence>
<protein>
    <recommendedName>
        <fullName>Flagellum biosynthesis repressor protein FlbT</fullName>
    </recommendedName>
</protein>
<name>FLBT_CAUVC</name>